<feature type="chain" id="PRO_1000121402" description="Large ribosomal subunit protein bL12">
    <location>
        <begin position="1"/>
        <end position="124"/>
    </location>
</feature>
<sequence length="124" mass="12543">MAIAKEDILAAVEGMTVLELNELVKAFEEKFGVSAAAVAVAGPAGGGAAAAAEEKTEFTVVLAEAGANKVSVIKAVRELTGLGLKEAKDLVDGAPKPVKEGVDKAAAEEAKKKLEEAGAKVEVK</sequence>
<organism>
    <name type="scientific">Burkholderia orbicola (strain MC0-3)</name>
    <dbReference type="NCBI Taxonomy" id="406425"/>
    <lineage>
        <taxon>Bacteria</taxon>
        <taxon>Pseudomonadati</taxon>
        <taxon>Pseudomonadota</taxon>
        <taxon>Betaproteobacteria</taxon>
        <taxon>Burkholderiales</taxon>
        <taxon>Burkholderiaceae</taxon>
        <taxon>Burkholderia</taxon>
        <taxon>Burkholderia cepacia complex</taxon>
        <taxon>Burkholderia orbicola</taxon>
    </lineage>
</organism>
<proteinExistence type="inferred from homology"/>
<dbReference type="EMBL" id="CP000958">
    <property type="protein sequence ID" value="ACA89498.1"/>
    <property type="molecule type" value="Genomic_DNA"/>
</dbReference>
<dbReference type="RefSeq" id="WP_006477198.1">
    <property type="nucleotide sequence ID" value="NC_010508.1"/>
</dbReference>
<dbReference type="SMR" id="B1JU13"/>
<dbReference type="GeneID" id="93051727"/>
<dbReference type="KEGG" id="bcm:Bcenmc03_0318"/>
<dbReference type="HOGENOM" id="CLU_086499_3_2_4"/>
<dbReference type="Proteomes" id="UP000002169">
    <property type="component" value="Chromosome 1"/>
</dbReference>
<dbReference type="GO" id="GO:0022625">
    <property type="term" value="C:cytosolic large ribosomal subunit"/>
    <property type="evidence" value="ECO:0007669"/>
    <property type="project" value="TreeGrafter"/>
</dbReference>
<dbReference type="GO" id="GO:0003729">
    <property type="term" value="F:mRNA binding"/>
    <property type="evidence" value="ECO:0007669"/>
    <property type="project" value="TreeGrafter"/>
</dbReference>
<dbReference type="GO" id="GO:0003735">
    <property type="term" value="F:structural constituent of ribosome"/>
    <property type="evidence" value="ECO:0007669"/>
    <property type="project" value="InterPro"/>
</dbReference>
<dbReference type="GO" id="GO:0006412">
    <property type="term" value="P:translation"/>
    <property type="evidence" value="ECO:0007669"/>
    <property type="project" value="UniProtKB-UniRule"/>
</dbReference>
<dbReference type="CDD" id="cd00387">
    <property type="entry name" value="Ribosomal_L7_L12"/>
    <property type="match status" value="1"/>
</dbReference>
<dbReference type="FunFam" id="3.30.1390.10:FF:000001">
    <property type="entry name" value="50S ribosomal protein L7/L12"/>
    <property type="match status" value="1"/>
</dbReference>
<dbReference type="Gene3D" id="3.30.1390.10">
    <property type="match status" value="1"/>
</dbReference>
<dbReference type="Gene3D" id="1.20.5.710">
    <property type="entry name" value="Single helix bin"/>
    <property type="match status" value="1"/>
</dbReference>
<dbReference type="HAMAP" id="MF_00368">
    <property type="entry name" value="Ribosomal_bL12"/>
    <property type="match status" value="1"/>
</dbReference>
<dbReference type="InterPro" id="IPR000206">
    <property type="entry name" value="Ribosomal_bL12"/>
</dbReference>
<dbReference type="InterPro" id="IPR013823">
    <property type="entry name" value="Ribosomal_bL12_C"/>
</dbReference>
<dbReference type="InterPro" id="IPR014719">
    <property type="entry name" value="Ribosomal_bL12_C/ClpS-like"/>
</dbReference>
<dbReference type="InterPro" id="IPR008932">
    <property type="entry name" value="Ribosomal_bL12_oligo"/>
</dbReference>
<dbReference type="InterPro" id="IPR036235">
    <property type="entry name" value="Ribosomal_bL12_oligo_N_sf"/>
</dbReference>
<dbReference type="NCBIfam" id="TIGR00855">
    <property type="entry name" value="L12"/>
    <property type="match status" value="1"/>
</dbReference>
<dbReference type="PANTHER" id="PTHR45987">
    <property type="entry name" value="39S RIBOSOMAL PROTEIN L12"/>
    <property type="match status" value="1"/>
</dbReference>
<dbReference type="PANTHER" id="PTHR45987:SF4">
    <property type="entry name" value="LARGE RIBOSOMAL SUBUNIT PROTEIN BL12M"/>
    <property type="match status" value="1"/>
</dbReference>
<dbReference type="Pfam" id="PF00542">
    <property type="entry name" value="Ribosomal_L12"/>
    <property type="match status" value="1"/>
</dbReference>
<dbReference type="Pfam" id="PF16320">
    <property type="entry name" value="Ribosomal_L12_N"/>
    <property type="match status" value="1"/>
</dbReference>
<dbReference type="SUPFAM" id="SSF54736">
    <property type="entry name" value="ClpS-like"/>
    <property type="match status" value="1"/>
</dbReference>
<dbReference type="SUPFAM" id="SSF48300">
    <property type="entry name" value="Ribosomal protein L7/12, oligomerisation (N-terminal) domain"/>
    <property type="match status" value="1"/>
</dbReference>
<accession>B1JU13</accession>
<keyword id="KW-0687">Ribonucleoprotein</keyword>
<keyword id="KW-0689">Ribosomal protein</keyword>
<comment type="function">
    <text evidence="1">Forms part of the ribosomal stalk which helps the ribosome interact with GTP-bound translation factors. Is thus essential for accurate translation.</text>
</comment>
<comment type="subunit">
    <text evidence="1">Homodimer. Part of the ribosomal stalk of the 50S ribosomal subunit. Forms a multimeric L10(L12)X complex, where L10 forms an elongated spine to which 2 to 4 L12 dimers bind in a sequential fashion. Binds GTP-bound translation factors.</text>
</comment>
<comment type="similarity">
    <text evidence="1">Belongs to the bacterial ribosomal protein bL12 family.</text>
</comment>
<name>RL7_BURO0</name>
<evidence type="ECO:0000255" key="1">
    <source>
        <dbReference type="HAMAP-Rule" id="MF_00368"/>
    </source>
</evidence>
<evidence type="ECO:0000305" key="2"/>
<reference key="1">
    <citation type="submission" date="2008-02" db="EMBL/GenBank/DDBJ databases">
        <title>Complete sequence of chromosome 1 of Burkholderia cenocepacia MC0-3.</title>
        <authorList>
            <person name="Copeland A."/>
            <person name="Lucas S."/>
            <person name="Lapidus A."/>
            <person name="Barry K."/>
            <person name="Bruce D."/>
            <person name="Goodwin L."/>
            <person name="Glavina del Rio T."/>
            <person name="Dalin E."/>
            <person name="Tice H."/>
            <person name="Pitluck S."/>
            <person name="Chain P."/>
            <person name="Malfatti S."/>
            <person name="Shin M."/>
            <person name="Vergez L."/>
            <person name="Schmutz J."/>
            <person name="Larimer F."/>
            <person name="Land M."/>
            <person name="Hauser L."/>
            <person name="Kyrpides N."/>
            <person name="Mikhailova N."/>
            <person name="Tiedje J."/>
            <person name="Richardson P."/>
        </authorList>
    </citation>
    <scope>NUCLEOTIDE SEQUENCE [LARGE SCALE GENOMIC DNA]</scope>
    <source>
        <strain>MC0-3</strain>
    </source>
</reference>
<gene>
    <name evidence="1" type="primary">rplL</name>
    <name type="ordered locus">Bcenmc03_0318</name>
</gene>
<protein>
    <recommendedName>
        <fullName evidence="1">Large ribosomal subunit protein bL12</fullName>
    </recommendedName>
    <alternativeName>
        <fullName evidence="2">50S ribosomal protein L7/L12</fullName>
    </alternativeName>
</protein>